<accession>Q99LI7</accession>
<proteinExistence type="evidence at protein level"/>
<name>CSTF3_MOUSE</name>
<comment type="function">
    <text evidence="1">One of the multiple factors required for polyadenylation and 3'-end cleavage of mammalian pre-mRNAs.</text>
</comment>
<comment type="subunit">
    <text evidence="1">Homodimer. The CSTF complex is composed of CSTF1 (50 kDa subunit), CSTF2 (64 kDa subunit) and CSTF3 (77 kDa subunit). CSTF3 directly interacts with CSTF1 and CSTF2. Interacts with FIP1L1 (By similarity).</text>
</comment>
<comment type="subcellular location">
    <subcellularLocation>
        <location evidence="1">Nucleus</location>
    </subcellularLocation>
</comment>
<organism>
    <name type="scientific">Mus musculus</name>
    <name type="common">Mouse</name>
    <dbReference type="NCBI Taxonomy" id="10090"/>
    <lineage>
        <taxon>Eukaryota</taxon>
        <taxon>Metazoa</taxon>
        <taxon>Chordata</taxon>
        <taxon>Craniata</taxon>
        <taxon>Vertebrata</taxon>
        <taxon>Euteleostomi</taxon>
        <taxon>Mammalia</taxon>
        <taxon>Eutheria</taxon>
        <taxon>Euarchontoglires</taxon>
        <taxon>Glires</taxon>
        <taxon>Rodentia</taxon>
        <taxon>Myomorpha</taxon>
        <taxon>Muroidea</taxon>
        <taxon>Muridae</taxon>
        <taxon>Murinae</taxon>
        <taxon>Mus</taxon>
        <taxon>Mus</taxon>
    </lineage>
</organism>
<protein>
    <recommendedName>
        <fullName>Cleavage stimulation factor subunit 3</fullName>
    </recommendedName>
    <alternativeName>
        <fullName>CF-1 77 kDa subunit</fullName>
    </alternativeName>
    <alternativeName>
        <fullName>Cleavage stimulation factor 77 kDa subunit</fullName>
        <shortName>CSTF 77 kDa subunit</shortName>
        <shortName>CstF-77</shortName>
    </alternativeName>
</protein>
<feature type="initiator methionine" description="Removed" evidence="2">
    <location>
        <position position="1"/>
    </location>
</feature>
<feature type="chain" id="PRO_0000205723" description="Cleavage stimulation factor subunit 3">
    <location>
        <begin position="2"/>
        <end position="717"/>
    </location>
</feature>
<feature type="repeat" description="HAT 1">
    <location>
        <begin position="45"/>
        <end position="77"/>
    </location>
</feature>
<feature type="repeat" description="HAT 2">
    <location>
        <begin position="79"/>
        <end position="110"/>
    </location>
</feature>
<feature type="repeat" description="HAT 3">
    <location>
        <begin position="117"/>
        <end position="152"/>
    </location>
</feature>
<feature type="repeat" description="HAT 4">
    <location>
        <begin position="163"/>
        <end position="196"/>
    </location>
</feature>
<feature type="repeat" description="HAT 5">
    <location>
        <begin position="221"/>
        <end position="261"/>
    </location>
</feature>
<feature type="repeat" description="HAT 6">
    <location>
        <begin position="271"/>
        <end position="303"/>
    </location>
</feature>
<feature type="repeat" description="HAT 7">
    <location>
        <begin position="319"/>
        <end position="352"/>
    </location>
</feature>
<feature type="repeat" description="HAT 8">
    <location>
        <begin position="354"/>
        <end position="387"/>
    </location>
</feature>
<feature type="repeat" description="HAT 9">
    <location>
        <begin position="458"/>
        <end position="494"/>
    </location>
</feature>
<feature type="region of interest" description="Disordered" evidence="3">
    <location>
        <begin position="683"/>
        <end position="704"/>
    </location>
</feature>
<feature type="modified residue" description="N-acetylserine" evidence="2">
    <location>
        <position position="2"/>
    </location>
</feature>
<feature type="modified residue" description="Phosphoserine" evidence="4 5 6">
    <location>
        <position position="691"/>
    </location>
</feature>
<feature type="helix" evidence="8">
    <location>
        <begin position="21"/>
        <end position="27"/>
    </location>
</feature>
<feature type="helix" evidence="8">
    <location>
        <begin position="32"/>
        <end position="43"/>
    </location>
</feature>
<feature type="helix" evidence="8">
    <location>
        <begin position="47"/>
        <end position="58"/>
    </location>
</feature>
<feature type="helix" evidence="8">
    <location>
        <begin position="65"/>
        <end position="77"/>
    </location>
</feature>
<feature type="helix" evidence="8">
    <location>
        <begin position="81"/>
        <end position="91"/>
    </location>
</feature>
<feature type="turn" evidence="8">
    <location>
        <begin position="92"/>
        <end position="94"/>
    </location>
</feature>
<feature type="helix" evidence="8">
    <location>
        <begin position="98"/>
        <end position="111"/>
    </location>
</feature>
<feature type="turn" evidence="8">
    <location>
        <begin position="112"/>
        <end position="114"/>
    </location>
</feature>
<feature type="helix" evidence="8">
    <location>
        <begin position="118"/>
        <end position="132"/>
    </location>
</feature>
<feature type="helix" evidence="8">
    <location>
        <begin position="140"/>
        <end position="152"/>
    </location>
</feature>
<feature type="helix" evidence="8">
    <location>
        <begin position="161"/>
        <end position="175"/>
    </location>
</feature>
<feature type="helix" evidence="8">
    <location>
        <begin position="183"/>
        <end position="197"/>
    </location>
</feature>
<feature type="helix" evidence="8">
    <location>
        <begin position="199"/>
        <end position="207"/>
    </location>
</feature>
<feature type="helix" evidence="8">
    <location>
        <begin position="210"/>
        <end position="229"/>
    </location>
</feature>
<feature type="strand" evidence="8">
    <location>
        <begin position="232"/>
        <end position="234"/>
    </location>
</feature>
<feature type="helix" evidence="7">
    <location>
        <begin position="243"/>
        <end position="260"/>
    </location>
</feature>
<feature type="helix" evidence="7">
    <location>
        <begin position="269"/>
        <end position="287"/>
    </location>
</feature>
<feature type="helix" evidence="7">
    <location>
        <begin position="291"/>
        <end position="310"/>
    </location>
</feature>
<feature type="helix" evidence="7">
    <location>
        <begin position="315"/>
        <end position="332"/>
    </location>
</feature>
<feature type="turn" evidence="7">
    <location>
        <begin position="333"/>
        <end position="338"/>
    </location>
</feature>
<feature type="helix" evidence="7">
    <location>
        <begin position="340"/>
        <end position="352"/>
    </location>
</feature>
<feature type="helix" evidence="7">
    <location>
        <begin position="356"/>
        <end position="367"/>
    </location>
</feature>
<feature type="strand" evidence="7">
    <location>
        <begin position="369"/>
        <end position="372"/>
    </location>
</feature>
<feature type="helix" evidence="7">
    <location>
        <begin position="375"/>
        <end position="389"/>
    </location>
</feature>
<feature type="helix" evidence="7">
    <location>
        <begin position="391"/>
        <end position="402"/>
    </location>
</feature>
<feature type="helix" evidence="7">
    <location>
        <begin position="410"/>
        <end position="421"/>
    </location>
</feature>
<feature type="helix" evidence="7">
    <location>
        <begin position="426"/>
        <end position="440"/>
    </location>
</feature>
<feature type="helix" evidence="7">
    <location>
        <begin position="444"/>
        <end position="455"/>
    </location>
</feature>
<feature type="helix" evidence="7">
    <location>
        <begin position="460"/>
        <end position="472"/>
    </location>
</feature>
<feature type="strand" evidence="7">
    <location>
        <begin position="473"/>
        <end position="476"/>
    </location>
</feature>
<feature type="helix" evidence="7">
    <location>
        <begin position="478"/>
        <end position="480"/>
    </location>
</feature>
<feature type="helix" evidence="7">
    <location>
        <begin position="482"/>
        <end position="495"/>
    </location>
</feature>
<feature type="helix" evidence="7">
    <location>
        <begin position="498"/>
        <end position="511"/>
    </location>
</feature>
<feature type="turn" evidence="7">
    <location>
        <begin position="512"/>
        <end position="516"/>
    </location>
</feature>
<feature type="helix" evidence="7">
    <location>
        <begin position="520"/>
        <end position="525"/>
    </location>
</feature>
<feature type="turn" evidence="7">
    <location>
        <begin position="526"/>
        <end position="528"/>
    </location>
</feature>
<feature type="helix" evidence="7">
    <location>
        <begin position="538"/>
        <end position="542"/>
    </location>
</feature>
<feature type="turn" evidence="7">
    <location>
        <begin position="543"/>
        <end position="545"/>
    </location>
</feature>
<evidence type="ECO:0000250" key="1"/>
<evidence type="ECO:0000250" key="2">
    <source>
        <dbReference type="UniProtKB" id="Q12996"/>
    </source>
</evidence>
<evidence type="ECO:0000256" key="3">
    <source>
        <dbReference type="SAM" id="MobiDB-lite"/>
    </source>
</evidence>
<evidence type="ECO:0007744" key="4">
    <source>
    </source>
</evidence>
<evidence type="ECO:0007744" key="5">
    <source>
    </source>
</evidence>
<evidence type="ECO:0007744" key="6">
    <source>
    </source>
</evidence>
<evidence type="ECO:0007829" key="7">
    <source>
        <dbReference type="PDB" id="2OND"/>
    </source>
</evidence>
<evidence type="ECO:0007829" key="8">
    <source>
        <dbReference type="PDB" id="2OOE"/>
    </source>
</evidence>
<sequence length="717" mass="82877">MSGDAAAEQAAEYVPEKVKKAEKKLEENPYDLDAWSILIREAQNQPIDKARKTYERLVAQFPSSGRFWKLYIEAEIKAKNYDKVEKLFQRCLMKVLHIDLWKCYLSYVRETKGKLPSYKEKMAQAYDFALDKIGMEIMSYQIWVDYINFLKGVEAVGSYAENQRITAVRRVYQRGCVNPMINIEQLWRDYNKYEEGINIHLAKKMIEDRSRDYMNARRVAKEYETVMKGLDRNAPSVPPQNTPQEAQQVDMWKKYIQWEKSNPLRTEDQTLITKRVMFAYEQCLLVLGHHPDIWYEAAQYLEQSSKLLAEKGDMNNAKLFSDEAANIYERAISTLLKKNMLLYFAYADYEESRMKYEKVHSIYNRLLAIEDIDPTLVYIQYMKFARRAEGIKSGRMIFKKAREDARTRHHVYVTAALMEYYCSKDKSVAFKIFELGLKKYGDIPEYVLAYIDYLSHLNEDNNTRVLFERVLTSGSLPPEKSGEIWARFLAFESNIGDLASILKVEKRRFTAFREEYEGKETALLVDRYKFMDLYPCSASELKALGYKDVSRAKLAAIIPDPVVAPSIVPVLKDEVDRKPEYPKPDTQQMIPFQPRHLAPPGLHPVPGGVFPVPPAAVVLMKLLPPPICFQGPFVQVDELMEIFRRCKIPNTVEEAVRIITGGAPELAVEGNGPVESSAVLTKAVKRPNEDSDEDEEKGAVVPPVHDIYRARQQKRIR</sequence>
<dbReference type="EMBL" id="BC003241">
    <property type="protein sequence ID" value="AAH03241.1"/>
    <property type="molecule type" value="mRNA"/>
</dbReference>
<dbReference type="CCDS" id="CCDS16490.1"/>
<dbReference type="RefSeq" id="NP_663504.1">
    <property type="nucleotide sequence ID" value="NM_145529.3"/>
</dbReference>
<dbReference type="PDB" id="2OND">
    <property type="method" value="X-ray"/>
    <property type="resolution" value="2.80 A"/>
    <property type="chains" value="A/B=242-549"/>
</dbReference>
<dbReference type="PDB" id="2OOE">
    <property type="method" value="X-ray"/>
    <property type="resolution" value="3.00 A"/>
    <property type="chains" value="A=21-549"/>
</dbReference>
<dbReference type="PDBsum" id="2OND"/>
<dbReference type="PDBsum" id="2OOE"/>
<dbReference type="SMR" id="Q99LI7"/>
<dbReference type="BioGRID" id="230731">
    <property type="interactions" value="4"/>
</dbReference>
<dbReference type="FunCoup" id="Q99LI7">
    <property type="interactions" value="4732"/>
</dbReference>
<dbReference type="STRING" id="10090.ENSMUSP00000028599"/>
<dbReference type="GlyGen" id="Q99LI7">
    <property type="glycosylation" value="2 sites, 1 O-linked glycan (1 site)"/>
</dbReference>
<dbReference type="iPTMnet" id="Q99LI7"/>
<dbReference type="PhosphoSitePlus" id="Q99LI7"/>
<dbReference type="SwissPalm" id="Q99LI7"/>
<dbReference type="jPOST" id="Q99LI7"/>
<dbReference type="PaxDb" id="10090-ENSMUSP00000028599"/>
<dbReference type="PeptideAtlas" id="Q99LI7"/>
<dbReference type="ProteomicsDB" id="285383"/>
<dbReference type="Pumba" id="Q99LI7"/>
<dbReference type="Antibodypedia" id="25689">
    <property type="antibodies" value="218 antibodies from 27 providers"/>
</dbReference>
<dbReference type="DNASU" id="228410"/>
<dbReference type="Ensembl" id="ENSMUST00000028599.8">
    <property type="protein sequence ID" value="ENSMUSP00000028599.8"/>
    <property type="gene ID" value="ENSMUSG00000027176.9"/>
</dbReference>
<dbReference type="GeneID" id="228410"/>
<dbReference type="KEGG" id="mmu:228410"/>
<dbReference type="UCSC" id="uc008ljz.2">
    <property type="organism name" value="mouse"/>
</dbReference>
<dbReference type="AGR" id="MGI:1351825"/>
<dbReference type="CTD" id="1479"/>
<dbReference type="MGI" id="MGI:1351825">
    <property type="gene designation" value="Cstf3"/>
</dbReference>
<dbReference type="VEuPathDB" id="HostDB:ENSMUSG00000027176"/>
<dbReference type="eggNOG" id="KOG1914">
    <property type="taxonomic scope" value="Eukaryota"/>
</dbReference>
<dbReference type="GeneTree" id="ENSGT00390000006758"/>
<dbReference type="HOGENOM" id="CLU_007630_3_1_1"/>
<dbReference type="InParanoid" id="Q99LI7"/>
<dbReference type="OMA" id="CFRGPFV"/>
<dbReference type="OrthoDB" id="26282at2759"/>
<dbReference type="PhylomeDB" id="Q99LI7"/>
<dbReference type="TreeFam" id="TF105867"/>
<dbReference type="Reactome" id="R-MMU-72187">
    <property type="pathway name" value="mRNA 3'-end processing"/>
</dbReference>
<dbReference type="Reactome" id="R-MMU-72203">
    <property type="pathway name" value="Processing of Capped Intron-Containing Pre-mRNA"/>
</dbReference>
<dbReference type="Reactome" id="R-MMU-73856">
    <property type="pathway name" value="RNA Polymerase II Transcription Termination"/>
</dbReference>
<dbReference type="Reactome" id="R-MMU-77595">
    <property type="pathway name" value="Processing of Intronless Pre-mRNAs"/>
</dbReference>
<dbReference type="BioGRID-ORCS" id="228410">
    <property type="hits" value="26 hits in 82 CRISPR screens"/>
</dbReference>
<dbReference type="ChiTaRS" id="Cstf3">
    <property type="organism name" value="mouse"/>
</dbReference>
<dbReference type="EvolutionaryTrace" id="Q99LI7"/>
<dbReference type="PRO" id="PR:Q99LI7"/>
<dbReference type="Proteomes" id="UP000000589">
    <property type="component" value="Chromosome 2"/>
</dbReference>
<dbReference type="RNAct" id="Q99LI7">
    <property type="molecule type" value="protein"/>
</dbReference>
<dbReference type="Bgee" id="ENSMUSG00000027176">
    <property type="expression patterns" value="Expressed in primitive streak and 270 other cell types or tissues"/>
</dbReference>
<dbReference type="GO" id="GO:0005848">
    <property type="term" value="C:mRNA cleavage stimulating factor complex"/>
    <property type="evidence" value="ECO:0007669"/>
    <property type="project" value="Ensembl"/>
</dbReference>
<dbReference type="GO" id="GO:0005654">
    <property type="term" value="C:nucleoplasm"/>
    <property type="evidence" value="ECO:0007669"/>
    <property type="project" value="Ensembl"/>
</dbReference>
<dbReference type="GO" id="GO:0180010">
    <property type="term" value="P:co-transcriptional mRNA 3'-end processing, cleavage and polyadenylation pathway"/>
    <property type="evidence" value="ECO:0007669"/>
    <property type="project" value="Ensembl"/>
</dbReference>
<dbReference type="FunFam" id="1.25.40.1040:FF:000002">
    <property type="entry name" value="Cleavage stimulation factor subunit 3"/>
    <property type="match status" value="1"/>
</dbReference>
<dbReference type="FunFam" id="1.25.40.10:FF:002655">
    <property type="entry name" value="Cleavage stimulation factor subunit 3"/>
    <property type="match status" value="1"/>
</dbReference>
<dbReference type="Gene3D" id="1.25.40.1040">
    <property type="match status" value="1"/>
</dbReference>
<dbReference type="InterPro" id="IPR003107">
    <property type="entry name" value="HAT"/>
</dbReference>
<dbReference type="InterPro" id="IPR045243">
    <property type="entry name" value="Rna14-like"/>
</dbReference>
<dbReference type="InterPro" id="IPR008847">
    <property type="entry name" value="Suf"/>
</dbReference>
<dbReference type="InterPro" id="IPR011990">
    <property type="entry name" value="TPR-like_helical_dom_sf"/>
</dbReference>
<dbReference type="PANTHER" id="PTHR19980:SF0">
    <property type="entry name" value="CLEAVAGE STIMULATION FACTOR SUBUNIT 3"/>
    <property type="match status" value="1"/>
</dbReference>
<dbReference type="PANTHER" id="PTHR19980">
    <property type="entry name" value="RNA CLEAVAGE STIMULATION FACTOR"/>
    <property type="match status" value="1"/>
</dbReference>
<dbReference type="Pfam" id="PF05843">
    <property type="entry name" value="Suf"/>
    <property type="match status" value="1"/>
</dbReference>
<dbReference type="SMART" id="SM00386">
    <property type="entry name" value="HAT"/>
    <property type="match status" value="10"/>
</dbReference>
<dbReference type="SUPFAM" id="SSF48452">
    <property type="entry name" value="TPR-like"/>
    <property type="match status" value="1"/>
</dbReference>
<reference key="1">
    <citation type="journal article" date="2004" name="Genome Res.">
        <title>The status, quality, and expansion of the NIH full-length cDNA project: the Mammalian Gene Collection (MGC).</title>
        <authorList>
            <consortium name="The MGC Project Team"/>
        </authorList>
    </citation>
    <scope>NUCLEOTIDE SEQUENCE [LARGE SCALE MRNA]</scope>
    <source>
        <strain>FVB/N</strain>
        <tissue>Mammary tumor</tissue>
    </source>
</reference>
<reference key="2">
    <citation type="journal article" date="2007" name="Proc. Natl. Acad. Sci. U.S.A.">
        <title>Large-scale phosphorylation analysis of mouse liver.</title>
        <authorList>
            <person name="Villen J."/>
            <person name="Beausoleil S.A."/>
            <person name="Gerber S.A."/>
            <person name="Gygi S.P."/>
        </authorList>
    </citation>
    <scope>PHOSPHORYLATION [LARGE SCALE ANALYSIS] AT SER-691</scope>
    <scope>IDENTIFICATION BY MASS SPECTROMETRY [LARGE SCALE ANALYSIS]</scope>
    <source>
        <tissue>Liver</tissue>
    </source>
</reference>
<reference key="3">
    <citation type="journal article" date="2009" name="Immunity">
        <title>The phagosomal proteome in interferon-gamma-activated macrophages.</title>
        <authorList>
            <person name="Trost M."/>
            <person name="English L."/>
            <person name="Lemieux S."/>
            <person name="Courcelles M."/>
            <person name="Desjardins M."/>
            <person name="Thibault P."/>
        </authorList>
    </citation>
    <scope>PHOSPHORYLATION [LARGE SCALE ANALYSIS] AT SER-691</scope>
    <scope>IDENTIFICATION BY MASS SPECTROMETRY [LARGE SCALE ANALYSIS]</scope>
</reference>
<reference key="4">
    <citation type="journal article" date="2010" name="Cell">
        <title>A tissue-specific atlas of mouse protein phosphorylation and expression.</title>
        <authorList>
            <person name="Huttlin E.L."/>
            <person name="Jedrychowski M.P."/>
            <person name="Elias J.E."/>
            <person name="Goswami T."/>
            <person name="Rad R."/>
            <person name="Beausoleil S.A."/>
            <person name="Villen J."/>
            <person name="Haas W."/>
            <person name="Sowa M.E."/>
            <person name="Gygi S.P."/>
        </authorList>
    </citation>
    <scope>PHOSPHORYLATION [LARGE SCALE ANALYSIS] AT SER-691</scope>
    <scope>IDENTIFICATION BY MASS SPECTROMETRY [LARGE SCALE ANALYSIS]</scope>
    <source>
        <tissue>Brain</tissue>
        <tissue>Kidney</tissue>
        <tissue>Liver</tissue>
        <tissue>Lung</tissue>
        <tissue>Pancreas</tissue>
        <tissue>Spleen</tissue>
        <tissue>Testis</tissue>
    </source>
</reference>
<gene>
    <name type="primary">Cstf3</name>
</gene>
<keyword id="KW-0002">3D-structure</keyword>
<keyword id="KW-0007">Acetylation</keyword>
<keyword id="KW-0507">mRNA processing</keyword>
<keyword id="KW-0539">Nucleus</keyword>
<keyword id="KW-0597">Phosphoprotein</keyword>
<keyword id="KW-1185">Reference proteome</keyword>
<keyword id="KW-0677">Repeat</keyword>